<evidence type="ECO:0000250" key="1"/>
<evidence type="ECO:0000255" key="2">
    <source>
        <dbReference type="HAMAP-Rule" id="MF_00138"/>
    </source>
</evidence>
<reference key="1">
    <citation type="submission" date="2007-03" db="EMBL/GenBank/DDBJ databases">
        <title>Complete sequence of chromosome of Methanococcus maripaludis C5.</title>
        <authorList>
            <consortium name="US DOE Joint Genome Institute"/>
            <person name="Copeland A."/>
            <person name="Lucas S."/>
            <person name="Lapidus A."/>
            <person name="Barry K."/>
            <person name="Glavina del Rio T."/>
            <person name="Dalin E."/>
            <person name="Tice H."/>
            <person name="Pitluck S."/>
            <person name="Chertkov O."/>
            <person name="Brettin T."/>
            <person name="Bruce D."/>
            <person name="Han C."/>
            <person name="Detter J.C."/>
            <person name="Schmutz J."/>
            <person name="Larimer F."/>
            <person name="Land M."/>
            <person name="Hauser L."/>
            <person name="Kyrpides N."/>
            <person name="Mikhailova N."/>
            <person name="Sieprawska-Lupa M."/>
            <person name="Whitman W.B."/>
            <person name="Richardson P."/>
        </authorList>
    </citation>
    <scope>NUCLEOTIDE SEQUENCE [LARGE SCALE GENOMIC DNA]</scope>
    <source>
        <strain>C5 / ATCC BAA-1333</strain>
    </source>
</reference>
<proteinExistence type="inferred from homology"/>
<protein>
    <recommendedName>
        <fullName evidence="2">Phosphoribosylamine--glycine ligase</fullName>
        <ecNumber evidence="2">6.3.4.13</ecNumber>
    </recommendedName>
    <alternativeName>
        <fullName evidence="2">GARS</fullName>
    </alternativeName>
    <alternativeName>
        <fullName evidence="2">Glycinamide ribonucleotide synthetase</fullName>
    </alternativeName>
    <alternativeName>
        <fullName evidence="2">Phosphoribosylglycinamide synthetase</fullName>
    </alternativeName>
</protein>
<feature type="chain" id="PRO_1000018824" description="Phosphoribosylamine--glycine ligase">
    <location>
        <begin position="1"/>
        <end position="444"/>
    </location>
</feature>
<feature type="domain" description="ATP-grasp" evidence="2">
    <location>
        <begin position="109"/>
        <end position="324"/>
    </location>
</feature>
<feature type="binding site" evidence="2">
    <location>
        <begin position="140"/>
        <end position="202"/>
    </location>
    <ligand>
        <name>ATP</name>
        <dbReference type="ChEBI" id="CHEBI:30616"/>
    </ligand>
</feature>
<feature type="binding site" evidence="2">
    <location>
        <position position="282"/>
    </location>
    <ligand>
        <name>Mg(2+)</name>
        <dbReference type="ChEBI" id="CHEBI:18420"/>
        <label>1</label>
    </ligand>
</feature>
<feature type="binding site" evidence="2">
    <location>
        <position position="282"/>
    </location>
    <ligand>
        <name>Mn(2+)</name>
        <dbReference type="ChEBI" id="CHEBI:29035"/>
        <label>1</label>
    </ligand>
</feature>
<feature type="binding site" evidence="2">
    <location>
        <position position="294"/>
    </location>
    <ligand>
        <name>Mg(2+)</name>
        <dbReference type="ChEBI" id="CHEBI:18420"/>
        <label>1</label>
    </ligand>
</feature>
<feature type="binding site" evidence="2">
    <location>
        <position position="294"/>
    </location>
    <ligand>
        <name>Mg(2+)</name>
        <dbReference type="ChEBI" id="CHEBI:18420"/>
        <label>2</label>
    </ligand>
</feature>
<feature type="binding site" evidence="2">
    <location>
        <position position="294"/>
    </location>
    <ligand>
        <name>Mn(2+)</name>
        <dbReference type="ChEBI" id="CHEBI:29035"/>
        <label>1</label>
    </ligand>
</feature>
<feature type="binding site" evidence="2">
    <location>
        <position position="294"/>
    </location>
    <ligand>
        <name>Mn(2+)</name>
        <dbReference type="ChEBI" id="CHEBI:29035"/>
        <label>2</label>
    </ligand>
</feature>
<feature type="binding site" evidence="2">
    <location>
        <position position="296"/>
    </location>
    <ligand>
        <name>Mg(2+)</name>
        <dbReference type="ChEBI" id="CHEBI:18420"/>
        <label>2</label>
    </ligand>
</feature>
<feature type="binding site" evidence="2">
    <location>
        <position position="296"/>
    </location>
    <ligand>
        <name>Mn(2+)</name>
        <dbReference type="ChEBI" id="CHEBI:29035"/>
        <label>2</label>
    </ligand>
</feature>
<keyword id="KW-0067">ATP-binding</keyword>
<keyword id="KW-0436">Ligase</keyword>
<keyword id="KW-0460">Magnesium</keyword>
<keyword id="KW-0464">Manganese</keyword>
<keyword id="KW-0479">Metal-binding</keyword>
<keyword id="KW-0547">Nucleotide-binding</keyword>
<keyword id="KW-0658">Purine biosynthesis</keyword>
<accession>A4FZB0</accession>
<comment type="catalytic activity">
    <reaction evidence="2">
        <text>5-phospho-beta-D-ribosylamine + glycine + ATP = N(1)-(5-phospho-beta-D-ribosyl)glycinamide + ADP + phosphate + H(+)</text>
        <dbReference type="Rhea" id="RHEA:17453"/>
        <dbReference type="ChEBI" id="CHEBI:15378"/>
        <dbReference type="ChEBI" id="CHEBI:30616"/>
        <dbReference type="ChEBI" id="CHEBI:43474"/>
        <dbReference type="ChEBI" id="CHEBI:57305"/>
        <dbReference type="ChEBI" id="CHEBI:58681"/>
        <dbReference type="ChEBI" id="CHEBI:143788"/>
        <dbReference type="ChEBI" id="CHEBI:456216"/>
        <dbReference type="EC" id="6.3.4.13"/>
    </reaction>
</comment>
<comment type="cofactor">
    <cofactor evidence="1">
        <name>Mg(2+)</name>
        <dbReference type="ChEBI" id="CHEBI:18420"/>
    </cofactor>
    <cofactor evidence="1">
        <name>Mn(2+)</name>
        <dbReference type="ChEBI" id="CHEBI:29035"/>
    </cofactor>
    <text evidence="1">Binds 2 magnesium or manganese ions per subunit.</text>
</comment>
<comment type="pathway">
    <text evidence="2">Purine metabolism; IMP biosynthesis via de novo pathway; N(1)-(5-phospho-D-ribosyl)glycinamide from 5-phospho-alpha-D-ribose 1-diphosphate: step 2/2.</text>
</comment>
<comment type="similarity">
    <text evidence="2">Belongs to the GARS family.</text>
</comment>
<organism>
    <name type="scientific">Methanococcus maripaludis (strain C5 / ATCC BAA-1333)</name>
    <dbReference type="NCBI Taxonomy" id="402880"/>
    <lineage>
        <taxon>Archaea</taxon>
        <taxon>Methanobacteriati</taxon>
        <taxon>Methanobacteriota</taxon>
        <taxon>Methanomada group</taxon>
        <taxon>Methanococci</taxon>
        <taxon>Methanococcales</taxon>
        <taxon>Methanococcaceae</taxon>
        <taxon>Methanococcus</taxon>
    </lineage>
</organism>
<sequence length="444" mass="48696">MKVLLIGGGAREHAIAMALKKNELVELYTLMKNKNPGIYAISDEVSFNSETDVPAIKEFAEKIKPELAVIGPEAPLGVGAADLLIEMGIPTVGPKKLPAQIETSKEFMRNLFKKYEIDGSLRYAAFNEYGNDLETFIDEMTSLGKDVVVKPAGLTGGKGVKVVGEQLKDNEEAKIYAKEVFDKSIGGGNIIIEEKLVGVEFTLHGFVDGENIVFMPAVQDHPHAYNNDEGPITGGMGSYSCPNHGLPFLSAEMLDRAEKIMEKTVSSINSEVGPYNGFLYGQFMLTADGPKIIEYNARFGDPEAMNLLPILKTDFLDVCFAIAEGKLDKINLEFENKATVCKYVVPNGYPIDPVRNKELTVDEKAIENADAILFYASINEKNGKLYITGSRSAAVVGISENIEEAEKIAQMAIENFKGEVYYRSDIGTLGLIKKRIERVKQLAK</sequence>
<dbReference type="EC" id="6.3.4.13" evidence="2"/>
<dbReference type="EMBL" id="CP000609">
    <property type="protein sequence ID" value="ABO35544.1"/>
    <property type="molecule type" value="Genomic_DNA"/>
</dbReference>
<dbReference type="RefSeq" id="WP_011868997.1">
    <property type="nucleotide sequence ID" value="NC_009135.1"/>
</dbReference>
<dbReference type="SMR" id="A4FZB0"/>
<dbReference type="STRING" id="402880.MmarC5_1246"/>
<dbReference type="GeneID" id="4929077"/>
<dbReference type="KEGG" id="mmq:MmarC5_1246"/>
<dbReference type="eggNOG" id="arCOG04415">
    <property type="taxonomic scope" value="Archaea"/>
</dbReference>
<dbReference type="HOGENOM" id="CLU_027420_3_0_2"/>
<dbReference type="OrthoDB" id="146558at2157"/>
<dbReference type="UniPathway" id="UPA00074">
    <property type="reaction ID" value="UER00125"/>
</dbReference>
<dbReference type="Proteomes" id="UP000000253">
    <property type="component" value="Chromosome"/>
</dbReference>
<dbReference type="GO" id="GO:0005524">
    <property type="term" value="F:ATP binding"/>
    <property type="evidence" value="ECO:0007669"/>
    <property type="project" value="UniProtKB-KW"/>
</dbReference>
<dbReference type="GO" id="GO:0046872">
    <property type="term" value="F:metal ion binding"/>
    <property type="evidence" value="ECO:0007669"/>
    <property type="project" value="UniProtKB-KW"/>
</dbReference>
<dbReference type="GO" id="GO:0004637">
    <property type="term" value="F:phosphoribosylamine-glycine ligase activity"/>
    <property type="evidence" value="ECO:0007669"/>
    <property type="project" value="UniProtKB-UniRule"/>
</dbReference>
<dbReference type="GO" id="GO:0006189">
    <property type="term" value="P:'de novo' IMP biosynthetic process"/>
    <property type="evidence" value="ECO:0007669"/>
    <property type="project" value="UniProtKB-UniRule"/>
</dbReference>
<dbReference type="GO" id="GO:0009113">
    <property type="term" value="P:purine nucleobase biosynthetic process"/>
    <property type="evidence" value="ECO:0007669"/>
    <property type="project" value="InterPro"/>
</dbReference>
<dbReference type="Gene3D" id="3.40.50.20">
    <property type="match status" value="1"/>
</dbReference>
<dbReference type="Gene3D" id="3.30.1490.20">
    <property type="entry name" value="ATP-grasp fold, A domain"/>
    <property type="match status" value="1"/>
</dbReference>
<dbReference type="Gene3D" id="3.30.470.20">
    <property type="entry name" value="ATP-grasp fold, B domain"/>
    <property type="match status" value="1"/>
</dbReference>
<dbReference type="Gene3D" id="3.90.600.10">
    <property type="entry name" value="Phosphoribosylglycinamide synthetase, C-terminal domain"/>
    <property type="match status" value="1"/>
</dbReference>
<dbReference type="HAMAP" id="MF_00138">
    <property type="entry name" value="GARS"/>
    <property type="match status" value="1"/>
</dbReference>
<dbReference type="InterPro" id="IPR011761">
    <property type="entry name" value="ATP-grasp"/>
</dbReference>
<dbReference type="InterPro" id="IPR013815">
    <property type="entry name" value="ATP_grasp_subdomain_1"/>
</dbReference>
<dbReference type="InterPro" id="IPR016185">
    <property type="entry name" value="PreATP-grasp_dom_sf"/>
</dbReference>
<dbReference type="InterPro" id="IPR020561">
    <property type="entry name" value="PRibGlycinamid_synth_ATP-grasp"/>
</dbReference>
<dbReference type="InterPro" id="IPR000115">
    <property type="entry name" value="PRibGlycinamide_synth"/>
</dbReference>
<dbReference type="InterPro" id="IPR020560">
    <property type="entry name" value="PRibGlycinamide_synth_C-dom"/>
</dbReference>
<dbReference type="InterPro" id="IPR037123">
    <property type="entry name" value="PRibGlycinamide_synth_C_sf"/>
</dbReference>
<dbReference type="InterPro" id="IPR020559">
    <property type="entry name" value="PRibGlycinamide_synth_CS"/>
</dbReference>
<dbReference type="InterPro" id="IPR020562">
    <property type="entry name" value="PRibGlycinamide_synth_N"/>
</dbReference>
<dbReference type="InterPro" id="IPR011054">
    <property type="entry name" value="Rudment_hybrid_motif"/>
</dbReference>
<dbReference type="NCBIfam" id="TIGR00877">
    <property type="entry name" value="purD"/>
    <property type="match status" value="1"/>
</dbReference>
<dbReference type="PANTHER" id="PTHR43472">
    <property type="entry name" value="PHOSPHORIBOSYLAMINE--GLYCINE LIGASE"/>
    <property type="match status" value="1"/>
</dbReference>
<dbReference type="PANTHER" id="PTHR43472:SF1">
    <property type="entry name" value="PHOSPHORIBOSYLAMINE--GLYCINE LIGASE, CHLOROPLASTIC"/>
    <property type="match status" value="1"/>
</dbReference>
<dbReference type="Pfam" id="PF01071">
    <property type="entry name" value="GARS_A"/>
    <property type="match status" value="1"/>
</dbReference>
<dbReference type="Pfam" id="PF02843">
    <property type="entry name" value="GARS_C"/>
    <property type="match status" value="1"/>
</dbReference>
<dbReference type="Pfam" id="PF02844">
    <property type="entry name" value="GARS_N"/>
    <property type="match status" value="1"/>
</dbReference>
<dbReference type="SMART" id="SM01209">
    <property type="entry name" value="GARS_A"/>
    <property type="match status" value="1"/>
</dbReference>
<dbReference type="SMART" id="SM01210">
    <property type="entry name" value="GARS_C"/>
    <property type="match status" value="1"/>
</dbReference>
<dbReference type="SUPFAM" id="SSF56059">
    <property type="entry name" value="Glutathione synthetase ATP-binding domain-like"/>
    <property type="match status" value="1"/>
</dbReference>
<dbReference type="SUPFAM" id="SSF52440">
    <property type="entry name" value="PreATP-grasp domain"/>
    <property type="match status" value="1"/>
</dbReference>
<dbReference type="SUPFAM" id="SSF51246">
    <property type="entry name" value="Rudiment single hybrid motif"/>
    <property type="match status" value="1"/>
</dbReference>
<dbReference type="PROSITE" id="PS50975">
    <property type="entry name" value="ATP_GRASP"/>
    <property type="match status" value="1"/>
</dbReference>
<dbReference type="PROSITE" id="PS00184">
    <property type="entry name" value="GARS"/>
    <property type="match status" value="1"/>
</dbReference>
<gene>
    <name evidence="2" type="primary">purD</name>
    <name type="ordered locus">MmarC5_1246</name>
</gene>
<name>PUR2_METM5</name>